<gene>
    <name type="ORF">IIV6-396L</name>
</gene>
<sequence>MFKFNIDNPLHKLHKIQSKVSEINTEGGSGGGDGVDEIKTINPATETSLGVVQLSGVLKGTATNPELSFNCVKSNHLSEECVQYNHIQKLSKASLLGQTTKSGGNITEVELNSGLILENGKLSLDLPSIITLSDVMATKSELGVITLGDGGDLNGSPNVNLLENGKISNDPVIGLNKVTYPKIQKVTGKSLLGNSSIFDDNVEEIKIKNGLVLEDSSLSLDVNTLPQASSTTFGVIKLSGDLSGNASSPTIKNQSITSYKLAPLPKHTILGSLDNTLSPTPISLHKSLGVVNEQLKVNPKEIQSTTDSLGTIMLSGDLTGTATNPEISEKSITYSKMQSVNGTKVLLGNLSGTGNISEIEVGDSLILKNGFLDVDLDKLHEESILKVESGGTGNSVLPLGYLKGKEKDPVESVQKIPVTDIFPNVVGSVNGVFPSKPGGNISLIFSNVTTGILSEIPSRQVNGTIYIISGDPTPTNNGRTFISDGTNWNEVTNHLGSTDARYVQLAGSTMSEDASLVFPSTSNIILNQTSFSNKDAVTKEYVDEIKINDATVSSKGILELSGDFDSLSTADNPIIKSATPTVKGKIQLAGDFDPLSTSSLPLIKAASTTSRGKIQLSGDFDPLSTSTNPIIKSATVHSEGKIQLSGDFDSKSTSQFPLIKEASEVHFGKIKLAGDLSGNADAPEIAHNAITYSKIQQASQKSIIGNAINGATDIGEVVIGNGLMLSSGGSLPTVGTLSVDSNTLPKATLNSYGSIQLNGDFNPLSTATAPMIGEGKITYKKMQQISSQRKLLGSASLPIGIQPIQEISVGPSLTYSGAGNNILNASTSFFSGTNPNTSPPTDRPTTSNLLYIGVDGSVWMWNGVHYSKGPGALNVLKSKNLYTIGPLGTPSPLSMSDFDIKVSAGQRIKIKYILNFQSTGGAEYAPSFGWNGVAQEDFFQASIIGFFSSSNTSSSFSTIYQTNTSFTSSSRQVTGGANLFALTSTNADNNLLAWNVGTPEQQLGGIGGQAIPIYITAYYENNTNKETILEIVFNRDLKTQTGQTIQIAGGVADYVTY</sequence>
<keyword id="KW-1185">Reference proteome</keyword>
<feature type="chain" id="PRO_0000377881" description="Uncharacterized protein 396L">
    <location>
        <begin position="1"/>
        <end position="1057"/>
    </location>
</feature>
<name>VF396_IIV6</name>
<comment type="similarity">
    <text evidence="1">Belongs to the IIV-6 261R/396L/443R family.</text>
</comment>
<organismHost>
    <name type="scientific">Acheta domesticus</name>
    <name type="common">House cricket</name>
    <dbReference type="NCBI Taxonomy" id="6997"/>
</organismHost>
<organismHost>
    <name type="scientific">Chilo suppressalis</name>
    <name type="common">Asiatic rice borer moth</name>
    <dbReference type="NCBI Taxonomy" id="168631"/>
</organismHost>
<organismHost>
    <name type="scientific">Gryllus bimaculatus</name>
    <name type="common">Two-spotted cricket</name>
    <dbReference type="NCBI Taxonomy" id="6999"/>
</organismHost>
<organismHost>
    <name type="scientific">Gryllus campestris</name>
    <dbReference type="NCBI Taxonomy" id="58607"/>
</organismHost>
<organismHost>
    <name type="scientific">Spodoptera frugiperda</name>
    <name type="common">Fall armyworm</name>
    <dbReference type="NCBI Taxonomy" id="7108"/>
</organismHost>
<dbReference type="EMBL" id="AF303741">
    <property type="protein sequence ID" value="AAK82256.1"/>
    <property type="molecule type" value="Genomic_DNA"/>
</dbReference>
<dbReference type="RefSeq" id="NP_149859.1">
    <property type="nucleotide sequence ID" value="NC_003038.1"/>
</dbReference>
<dbReference type="KEGG" id="vg:1733290"/>
<dbReference type="OrthoDB" id="15769at10239"/>
<dbReference type="Proteomes" id="UP000001359">
    <property type="component" value="Genome"/>
</dbReference>
<dbReference type="InterPro" id="IPR045571">
    <property type="entry name" value="DUF5907"/>
</dbReference>
<dbReference type="Pfam" id="PF19264">
    <property type="entry name" value="DUF5907"/>
    <property type="match status" value="9"/>
</dbReference>
<reference key="1">
    <citation type="journal article" date="2001" name="Virology">
        <title>Analysis of the first complete DNA sequence of an invertebrate iridovirus: coding strategy of the genome of Chilo iridescent virus.</title>
        <authorList>
            <person name="Jakob N.J."/>
            <person name="Mueller K."/>
            <person name="Bahr U."/>
            <person name="Darai G."/>
        </authorList>
    </citation>
    <scope>NUCLEOTIDE SEQUENCE [LARGE SCALE GENOMIC DNA]</scope>
</reference>
<reference key="2">
    <citation type="journal article" date="2007" name="Virol. J.">
        <title>Comparative genomic analysis of the family Iridoviridae: re-annotating and defining the core set of iridovirus genes.</title>
        <authorList>
            <person name="Eaton H.E."/>
            <person name="Metcalf J."/>
            <person name="Penny E."/>
            <person name="Tcherepanov V."/>
            <person name="Upton C."/>
            <person name="Brunetti C.R."/>
        </authorList>
    </citation>
    <scope>GENOME REANNOTATION</scope>
</reference>
<evidence type="ECO:0000305" key="1"/>
<proteinExistence type="inferred from homology"/>
<accession>Q8QZQ7</accession>
<protein>
    <recommendedName>
        <fullName>Uncharacterized protein 396L</fullName>
    </recommendedName>
</protein>
<organism>
    <name type="scientific">Invertebrate iridescent virus 6</name>
    <name type="common">IIV-6</name>
    <name type="synonym">Chilo iridescent virus</name>
    <dbReference type="NCBI Taxonomy" id="176652"/>
    <lineage>
        <taxon>Viruses</taxon>
        <taxon>Varidnaviria</taxon>
        <taxon>Bamfordvirae</taxon>
        <taxon>Nucleocytoviricota</taxon>
        <taxon>Megaviricetes</taxon>
        <taxon>Pimascovirales</taxon>
        <taxon>Iridoviridae</taxon>
        <taxon>Betairidovirinae</taxon>
        <taxon>Iridovirus</taxon>
    </lineage>
</organism>